<accession>P55872</accession>
<sequence>MISKDQLVNEGIRAREVRLIGQNGDQLGIKSRQEALEIAGRANLDLVLVAANAKPPVCRIMDYGKFRFEQQKKEKEARKNQKIINLKEVRLSPTIDEHDFNTKLRNAIKFLEKGDKVKASIRFKGRAITHKEIGQRVLDRFSEACAEVATVETKPKMDGRSMFLMLAPKNEKQ</sequence>
<evidence type="ECO:0000250" key="1"/>
<evidence type="ECO:0000255" key="2">
    <source>
        <dbReference type="HAMAP-Rule" id="MF_00080"/>
    </source>
</evidence>
<keyword id="KW-0963">Cytoplasm</keyword>
<keyword id="KW-0396">Initiation factor</keyword>
<keyword id="KW-0648">Protein biosynthesis</keyword>
<keyword id="KW-1185">Reference proteome</keyword>
<protein>
    <recommendedName>
        <fullName evidence="2">Translation initiation factor IF-3</fullName>
    </recommendedName>
</protein>
<name>IF3_BACSU</name>
<reference key="1">
    <citation type="journal article" date="1996" name="Microbiology">
        <title>The dnaB-pheA (256 degrees-240 degrees) region of the Bacillus subtilis chromosome containing genes responsible for stress responses, the utilization of plant cell walls and primary metabolism.</title>
        <authorList>
            <person name="Wipat A."/>
            <person name="Carter N."/>
            <person name="Brignell C.S."/>
            <person name="Guy J.B."/>
            <person name="Piper K."/>
            <person name="Sanders J."/>
            <person name="Emmerson P.T."/>
            <person name="Harwood C.R."/>
        </authorList>
    </citation>
    <scope>NUCLEOTIDE SEQUENCE [GENOMIC DNA]</scope>
    <source>
        <strain>168</strain>
    </source>
</reference>
<reference key="2">
    <citation type="journal article" date="1997" name="Nature">
        <title>The complete genome sequence of the Gram-positive bacterium Bacillus subtilis.</title>
        <authorList>
            <person name="Kunst F."/>
            <person name="Ogasawara N."/>
            <person name="Moszer I."/>
            <person name="Albertini A.M."/>
            <person name="Alloni G."/>
            <person name="Azevedo V."/>
            <person name="Bertero M.G."/>
            <person name="Bessieres P."/>
            <person name="Bolotin A."/>
            <person name="Borchert S."/>
            <person name="Borriss R."/>
            <person name="Boursier L."/>
            <person name="Brans A."/>
            <person name="Braun M."/>
            <person name="Brignell S.C."/>
            <person name="Bron S."/>
            <person name="Brouillet S."/>
            <person name="Bruschi C.V."/>
            <person name="Caldwell B."/>
            <person name="Capuano V."/>
            <person name="Carter N.M."/>
            <person name="Choi S.-K."/>
            <person name="Codani J.-J."/>
            <person name="Connerton I.F."/>
            <person name="Cummings N.J."/>
            <person name="Daniel R.A."/>
            <person name="Denizot F."/>
            <person name="Devine K.M."/>
            <person name="Duesterhoeft A."/>
            <person name="Ehrlich S.D."/>
            <person name="Emmerson P.T."/>
            <person name="Entian K.-D."/>
            <person name="Errington J."/>
            <person name="Fabret C."/>
            <person name="Ferrari E."/>
            <person name="Foulger D."/>
            <person name="Fritz C."/>
            <person name="Fujita M."/>
            <person name="Fujita Y."/>
            <person name="Fuma S."/>
            <person name="Galizzi A."/>
            <person name="Galleron N."/>
            <person name="Ghim S.-Y."/>
            <person name="Glaser P."/>
            <person name="Goffeau A."/>
            <person name="Golightly E.J."/>
            <person name="Grandi G."/>
            <person name="Guiseppi G."/>
            <person name="Guy B.J."/>
            <person name="Haga K."/>
            <person name="Haiech J."/>
            <person name="Harwood C.R."/>
            <person name="Henaut A."/>
            <person name="Hilbert H."/>
            <person name="Holsappel S."/>
            <person name="Hosono S."/>
            <person name="Hullo M.-F."/>
            <person name="Itaya M."/>
            <person name="Jones L.-M."/>
            <person name="Joris B."/>
            <person name="Karamata D."/>
            <person name="Kasahara Y."/>
            <person name="Klaerr-Blanchard M."/>
            <person name="Klein C."/>
            <person name="Kobayashi Y."/>
            <person name="Koetter P."/>
            <person name="Koningstein G."/>
            <person name="Krogh S."/>
            <person name="Kumano M."/>
            <person name="Kurita K."/>
            <person name="Lapidus A."/>
            <person name="Lardinois S."/>
            <person name="Lauber J."/>
            <person name="Lazarevic V."/>
            <person name="Lee S.-M."/>
            <person name="Levine A."/>
            <person name="Liu H."/>
            <person name="Masuda S."/>
            <person name="Mauel C."/>
            <person name="Medigue C."/>
            <person name="Medina N."/>
            <person name="Mellado R.P."/>
            <person name="Mizuno M."/>
            <person name="Moestl D."/>
            <person name="Nakai S."/>
            <person name="Noback M."/>
            <person name="Noone D."/>
            <person name="O'Reilly M."/>
            <person name="Ogawa K."/>
            <person name="Ogiwara A."/>
            <person name="Oudega B."/>
            <person name="Park S.-H."/>
            <person name="Parro V."/>
            <person name="Pohl T.M."/>
            <person name="Portetelle D."/>
            <person name="Porwollik S."/>
            <person name="Prescott A.M."/>
            <person name="Presecan E."/>
            <person name="Pujic P."/>
            <person name="Purnelle B."/>
            <person name="Rapoport G."/>
            <person name="Rey M."/>
            <person name="Reynolds S."/>
            <person name="Rieger M."/>
            <person name="Rivolta C."/>
            <person name="Rocha E."/>
            <person name="Roche B."/>
            <person name="Rose M."/>
            <person name="Sadaie Y."/>
            <person name="Sato T."/>
            <person name="Scanlan E."/>
            <person name="Schleich S."/>
            <person name="Schroeter R."/>
            <person name="Scoffone F."/>
            <person name="Sekiguchi J."/>
            <person name="Sekowska A."/>
            <person name="Seror S.J."/>
            <person name="Serror P."/>
            <person name="Shin B.-S."/>
            <person name="Soldo B."/>
            <person name="Sorokin A."/>
            <person name="Tacconi E."/>
            <person name="Takagi T."/>
            <person name="Takahashi H."/>
            <person name="Takemaru K."/>
            <person name="Takeuchi M."/>
            <person name="Tamakoshi A."/>
            <person name="Tanaka T."/>
            <person name="Terpstra P."/>
            <person name="Tognoni A."/>
            <person name="Tosato V."/>
            <person name="Uchiyama S."/>
            <person name="Vandenbol M."/>
            <person name="Vannier F."/>
            <person name="Vassarotti A."/>
            <person name="Viari A."/>
            <person name="Wambutt R."/>
            <person name="Wedler E."/>
            <person name="Wedler H."/>
            <person name="Weitzenegger T."/>
            <person name="Winters P."/>
            <person name="Wipat A."/>
            <person name="Yamamoto H."/>
            <person name="Yamane K."/>
            <person name="Yasumoto K."/>
            <person name="Yata K."/>
            <person name="Yoshida K."/>
            <person name="Yoshikawa H.-F."/>
            <person name="Zumstein E."/>
            <person name="Yoshikawa H."/>
            <person name="Danchin A."/>
        </authorList>
    </citation>
    <scope>NUCLEOTIDE SEQUENCE [LARGE SCALE GENOMIC DNA]</scope>
    <source>
        <strain>168</strain>
    </source>
</reference>
<feature type="initiator methionine" description="Removed" evidence="1">
    <location>
        <position position="1"/>
    </location>
</feature>
<feature type="chain" id="PRO_0000177482" description="Translation initiation factor IF-3">
    <location>
        <begin position="2"/>
        <end position="173"/>
    </location>
</feature>
<proteinExistence type="inferred from homology"/>
<comment type="function">
    <text evidence="2">IF-3 binds to the 30S ribosomal subunit and shifts the equilibrium between 70S ribosomes and their 50S and 30S subunits in favor of the free subunits, thus enhancing the availability of 30S subunits on which protein synthesis initiation begins.</text>
</comment>
<comment type="subunit">
    <text evidence="2">Monomer.</text>
</comment>
<comment type="subcellular location">
    <subcellularLocation>
        <location evidence="2">Cytoplasm</location>
    </subcellularLocation>
</comment>
<comment type="similarity">
    <text evidence="2">Belongs to the IF-3 family.</text>
</comment>
<organism>
    <name type="scientific">Bacillus subtilis (strain 168)</name>
    <dbReference type="NCBI Taxonomy" id="224308"/>
    <lineage>
        <taxon>Bacteria</taxon>
        <taxon>Bacillati</taxon>
        <taxon>Bacillota</taxon>
        <taxon>Bacilli</taxon>
        <taxon>Bacillales</taxon>
        <taxon>Bacillaceae</taxon>
        <taxon>Bacillus</taxon>
    </lineage>
</organism>
<dbReference type="EMBL" id="Z75208">
    <property type="protein sequence ID" value="CAA99616.1"/>
    <property type="molecule type" value="Genomic_DNA"/>
</dbReference>
<dbReference type="EMBL" id="AL009126">
    <property type="protein sequence ID" value="CAB14847.1"/>
    <property type="molecule type" value="Genomic_DNA"/>
</dbReference>
<dbReference type="PIR" id="H69644">
    <property type="entry name" value="H69644"/>
</dbReference>
<dbReference type="RefSeq" id="NP_390765.1">
    <property type="nucleotide sequence ID" value="NC_000964.3"/>
</dbReference>
<dbReference type="RefSeq" id="WP_010886591.1">
    <property type="nucleotide sequence ID" value="NZ_OZ025638.1"/>
</dbReference>
<dbReference type="SMR" id="P55872"/>
<dbReference type="FunCoup" id="P55872">
    <property type="interactions" value="579"/>
</dbReference>
<dbReference type="IntAct" id="P55872">
    <property type="interactions" value="1"/>
</dbReference>
<dbReference type="MINT" id="P55872"/>
<dbReference type="STRING" id="224308.BSU28870"/>
<dbReference type="jPOST" id="P55872"/>
<dbReference type="PaxDb" id="224308-BSU28870"/>
<dbReference type="EnsemblBacteria" id="CAB14847">
    <property type="protein sequence ID" value="CAB14847"/>
    <property type="gene ID" value="BSU_28870"/>
</dbReference>
<dbReference type="GeneID" id="86872595"/>
<dbReference type="GeneID" id="937835"/>
<dbReference type="KEGG" id="bsu:BSU28870"/>
<dbReference type="PATRIC" id="fig|224308.43.peg.3021"/>
<dbReference type="eggNOG" id="COG0290">
    <property type="taxonomic scope" value="Bacteria"/>
</dbReference>
<dbReference type="InParanoid" id="P55872"/>
<dbReference type="OrthoDB" id="9806014at2"/>
<dbReference type="PhylomeDB" id="P55872"/>
<dbReference type="BioCyc" id="BSUB:BSU28870-MONOMER"/>
<dbReference type="Proteomes" id="UP000001570">
    <property type="component" value="Chromosome"/>
</dbReference>
<dbReference type="GO" id="GO:0005829">
    <property type="term" value="C:cytosol"/>
    <property type="evidence" value="ECO:0000318"/>
    <property type="project" value="GO_Central"/>
</dbReference>
<dbReference type="GO" id="GO:0043022">
    <property type="term" value="F:ribosome binding"/>
    <property type="evidence" value="ECO:0000318"/>
    <property type="project" value="GO_Central"/>
</dbReference>
<dbReference type="GO" id="GO:0003743">
    <property type="term" value="F:translation initiation factor activity"/>
    <property type="evidence" value="ECO:0000318"/>
    <property type="project" value="GO_Central"/>
</dbReference>
<dbReference type="GO" id="GO:0032790">
    <property type="term" value="P:ribosome disassembly"/>
    <property type="evidence" value="ECO:0000318"/>
    <property type="project" value="GO_Central"/>
</dbReference>
<dbReference type="FunFam" id="3.10.20.80:FF:000001">
    <property type="entry name" value="Translation initiation factor IF-3"/>
    <property type="match status" value="1"/>
</dbReference>
<dbReference type="FunFam" id="3.30.110.10:FF:000001">
    <property type="entry name" value="Translation initiation factor IF-3"/>
    <property type="match status" value="1"/>
</dbReference>
<dbReference type="Gene3D" id="3.30.110.10">
    <property type="entry name" value="Translation initiation factor 3 (IF-3), C-terminal domain"/>
    <property type="match status" value="1"/>
</dbReference>
<dbReference type="Gene3D" id="3.10.20.80">
    <property type="entry name" value="Translation initiation factor 3 (IF-3), N-terminal domain"/>
    <property type="match status" value="1"/>
</dbReference>
<dbReference type="HAMAP" id="MF_00080">
    <property type="entry name" value="IF_3"/>
    <property type="match status" value="1"/>
</dbReference>
<dbReference type="InterPro" id="IPR036788">
    <property type="entry name" value="T_IF-3_C_sf"/>
</dbReference>
<dbReference type="InterPro" id="IPR036787">
    <property type="entry name" value="T_IF-3_N_sf"/>
</dbReference>
<dbReference type="InterPro" id="IPR019813">
    <property type="entry name" value="Translation_initiation_fac3_CS"/>
</dbReference>
<dbReference type="InterPro" id="IPR001288">
    <property type="entry name" value="Translation_initiation_fac_3"/>
</dbReference>
<dbReference type="InterPro" id="IPR019815">
    <property type="entry name" value="Translation_initiation_fac_3_C"/>
</dbReference>
<dbReference type="InterPro" id="IPR019814">
    <property type="entry name" value="Translation_initiation_fac_3_N"/>
</dbReference>
<dbReference type="NCBIfam" id="TIGR00168">
    <property type="entry name" value="infC"/>
    <property type="match status" value="1"/>
</dbReference>
<dbReference type="PANTHER" id="PTHR10938">
    <property type="entry name" value="TRANSLATION INITIATION FACTOR IF-3"/>
    <property type="match status" value="1"/>
</dbReference>
<dbReference type="PANTHER" id="PTHR10938:SF0">
    <property type="entry name" value="TRANSLATION INITIATION FACTOR IF-3, MITOCHONDRIAL"/>
    <property type="match status" value="1"/>
</dbReference>
<dbReference type="Pfam" id="PF00707">
    <property type="entry name" value="IF3_C"/>
    <property type="match status" value="1"/>
</dbReference>
<dbReference type="Pfam" id="PF05198">
    <property type="entry name" value="IF3_N"/>
    <property type="match status" value="1"/>
</dbReference>
<dbReference type="SUPFAM" id="SSF55200">
    <property type="entry name" value="Translation initiation factor IF3, C-terminal domain"/>
    <property type="match status" value="1"/>
</dbReference>
<dbReference type="SUPFAM" id="SSF54364">
    <property type="entry name" value="Translation initiation factor IF3, N-terminal domain"/>
    <property type="match status" value="1"/>
</dbReference>
<dbReference type="PROSITE" id="PS00938">
    <property type="entry name" value="IF3"/>
    <property type="match status" value="1"/>
</dbReference>
<gene>
    <name evidence="2" type="primary">infC</name>
    <name type="ordered locus">BSU28870</name>
</gene>